<reference key="1">
    <citation type="journal article" date="1998" name="Nature">
        <title>Deciphering the biology of Mycobacterium tuberculosis from the complete genome sequence.</title>
        <authorList>
            <person name="Cole S.T."/>
            <person name="Brosch R."/>
            <person name="Parkhill J."/>
            <person name="Garnier T."/>
            <person name="Churcher C.M."/>
            <person name="Harris D.E."/>
            <person name="Gordon S.V."/>
            <person name="Eiglmeier K."/>
            <person name="Gas S."/>
            <person name="Barry C.E. III"/>
            <person name="Tekaia F."/>
            <person name="Badcock K."/>
            <person name="Basham D."/>
            <person name="Brown D."/>
            <person name="Chillingworth T."/>
            <person name="Connor R."/>
            <person name="Davies R.M."/>
            <person name="Devlin K."/>
            <person name="Feltwell T."/>
            <person name="Gentles S."/>
            <person name="Hamlin N."/>
            <person name="Holroyd S."/>
            <person name="Hornsby T."/>
            <person name="Jagels K."/>
            <person name="Krogh A."/>
            <person name="McLean J."/>
            <person name="Moule S."/>
            <person name="Murphy L.D."/>
            <person name="Oliver S."/>
            <person name="Osborne J."/>
            <person name="Quail M.A."/>
            <person name="Rajandream M.A."/>
            <person name="Rogers J."/>
            <person name="Rutter S."/>
            <person name="Seeger K."/>
            <person name="Skelton S."/>
            <person name="Squares S."/>
            <person name="Squares R."/>
            <person name="Sulston J.E."/>
            <person name="Taylor K."/>
            <person name="Whitehead S."/>
            <person name="Barrell B.G."/>
        </authorList>
    </citation>
    <scope>NUCLEOTIDE SEQUENCE [LARGE SCALE GENOMIC DNA]</scope>
    <source>
        <strain>ATCC 25618 / H37Rv</strain>
    </source>
</reference>
<reference key="2">
    <citation type="journal article" date="2011" name="Mol. Cell. Proteomics">
        <title>Proteogenomic analysis of Mycobacterium tuberculosis by high resolution mass spectrometry.</title>
        <authorList>
            <person name="Kelkar D.S."/>
            <person name="Kumar D."/>
            <person name="Kumar P."/>
            <person name="Balakrishnan L."/>
            <person name="Muthusamy B."/>
            <person name="Yadav A.K."/>
            <person name="Shrivastava P."/>
            <person name="Marimuthu A."/>
            <person name="Anand S."/>
            <person name="Sundaram H."/>
            <person name="Kingsbury R."/>
            <person name="Harsha H.C."/>
            <person name="Nair B."/>
            <person name="Prasad T.S."/>
            <person name="Chauhan D.S."/>
            <person name="Katoch K."/>
            <person name="Katoch V.M."/>
            <person name="Kumar P."/>
            <person name="Chaerkady R."/>
            <person name="Ramachandran S."/>
            <person name="Dash D."/>
            <person name="Pandey A."/>
        </authorList>
    </citation>
    <scope>IDENTIFICATION BY MASS SPECTROMETRY [LARGE SCALE ANALYSIS]</scope>
    <source>
        <strain>ATCC 25618 / H37Rv</strain>
    </source>
</reference>
<proteinExistence type="evidence at protein level"/>
<feature type="chain" id="PRO_0000184389" description="L-aspartate oxidase">
    <location>
        <begin position="1"/>
        <end position="527"/>
    </location>
</feature>
<feature type="active site" description="Proton donor/acceptor" evidence="1">
    <location>
        <position position="281"/>
    </location>
</feature>
<feature type="binding site" evidence="1">
    <location>
        <begin position="17"/>
        <end position="20"/>
    </location>
    <ligand>
        <name>FAD</name>
        <dbReference type="ChEBI" id="CHEBI:57692"/>
    </ligand>
</feature>
<feature type="binding site" evidence="1">
    <location>
        <position position="40"/>
    </location>
    <ligand>
        <name>FAD</name>
        <dbReference type="ChEBI" id="CHEBI:57692"/>
    </ligand>
</feature>
<feature type="binding site" evidence="1">
    <location>
        <begin position="48"/>
        <end position="55"/>
    </location>
    <ligand>
        <name>FAD</name>
        <dbReference type="ChEBI" id="CHEBI:57692"/>
    </ligand>
</feature>
<feature type="binding site" evidence="1">
    <location>
        <position position="212"/>
    </location>
    <ligand>
        <name>FAD</name>
        <dbReference type="ChEBI" id="CHEBI:57692"/>
    </ligand>
</feature>
<feature type="binding site" evidence="1">
    <location>
        <position position="364"/>
    </location>
    <ligand>
        <name>FAD</name>
        <dbReference type="ChEBI" id="CHEBI:57692"/>
    </ligand>
</feature>
<feature type="binding site" evidence="1">
    <location>
        <begin position="380"/>
        <end position="381"/>
    </location>
    <ligand>
        <name>FAD</name>
        <dbReference type="ChEBI" id="CHEBI:57692"/>
    </ligand>
</feature>
<feature type="site" description="Important in orienting the L-aspartate substrate" evidence="1">
    <location>
        <position position="121"/>
    </location>
</feature>
<dbReference type="EC" id="1.4.3.16" evidence="1"/>
<dbReference type="EMBL" id="AL123456">
    <property type="protein sequence ID" value="CCP44359.1"/>
    <property type="molecule type" value="Genomic_DNA"/>
</dbReference>
<dbReference type="PIR" id="E70543">
    <property type="entry name" value="E70543"/>
</dbReference>
<dbReference type="RefSeq" id="NP_216111.1">
    <property type="nucleotide sequence ID" value="NC_000962.3"/>
</dbReference>
<dbReference type="RefSeq" id="WP_003901204.1">
    <property type="nucleotide sequence ID" value="NZ_NVQJ01000016.1"/>
</dbReference>
<dbReference type="SMR" id="P9WJJ9"/>
<dbReference type="FunCoup" id="P9WJJ9">
    <property type="interactions" value="142"/>
</dbReference>
<dbReference type="STRING" id="83332.Rv1595"/>
<dbReference type="PaxDb" id="83332-Rv1595"/>
<dbReference type="DNASU" id="886285"/>
<dbReference type="GeneID" id="886285"/>
<dbReference type="KEGG" id="mtu:Rv1595"/>
<dbReference type="KEGG" id="mtv:RVBD_1595"/>
<dbReference type="PATRIC" id="fig|83332.111.peg.1773"/>
<dbReference type="TubercuList" id="Rv1595"/>
<dbReference type="eggNOG" id="COG0029">
    <property type="taxonomic scope" value="Bacteria"/>
</dbReference>
<dbReference type="InParanoid" id="P9WJJ9"/>
<dbReference type="OrthoDB" id="9805351at2"/>
<dbReference type="PhylomeDB" id="P9WJJ9"/>
<dbReference type="UniPathway" id="UPA00253">
    <property type="reaction ID" value="UER00326"/>
</dbReference>
<dbReference type="Proteomes" id="UP000001584">
    <property type="component" value="Chromosome"/>
</dbReference>
<dbReference type="GO" id="GO:0005737">
    <property type="term" value="C:cytoplasm"/>
    <property type="evidence" value="ECO:0007669"/>
    <property type="project" value="UniProtKB-SubCell"/>
</dbReference>
<dbReference type="GO" id="GO:0008734">
    <property type="term" value="F:L-aspartate oxidase activity"/>
    <property type="evidence" value="ECO:0000318"/>
    <property type="project" value="GO_Central"/>
</dbReference>
<dbReference type="GO" id="GO:0000166">
    <property type="term" value="F:nucleotide binding"/>
    <property type="evidence" value="ECO:0007669"/>
    <property type="project" value="UniProtKB-KW"/>
</dbReference>
<dbReference type="GO" id="GO:0033765">
    <property type="term" value="F:steroid dehydrogenase activity, acting on the CH-CH group of donors"/>
    <property type="evidence" value="ECO:0007669"/>
    <property type="project" value="UniProtKB-ARBA"/>
</dbReference>
<dbReference type="GO" id="GO:0034628">
    <property type="term" value="P:'de novo' NAD biosynthetic process from L-aspartate"/>
    <property type="evidence" value="ECO:0000318"/>
    <property type="project" value="GO_Central"/>
</dbReference>
<dbReference type="FunFam" id="3.90.700.10:FF:000002">
    <property type="entry name" value="L-aspartate oxidase"/>
    <property type="match status" value="1"/>
</dbReference>
<dbReference type="Gene3D" id="3.50.50.60">
    <property type="entry name" value="FAD/NAD(P)-binding domain"/>
    <property type="match status" value="1"/>
</dbReference>
<dbReference type="Gene3D" id="1.20.58.100">
    <property type="entry name" value="Fumarate reductase/succinate dehydrogenase flavoprotein-like, C-terminal domain"/>
    <property type="match status" value="1"/>
</dbReference>
<dbReference type="Gene3D" id="3.90.700.10">
    <property type="entry name" value="Succinate dehydrogenase/fumarate reductase flavoprotein, catalytic domain"/>
    <property type="match status" value="1"/>
</dbReference>
<dbReference type="InterPro" id="IPR003953">
    <property type="entry name" value="FAD-dep_OxRdtase_2_FAD-bd"/>
</dbReference>
<dbReference type="InterPro" id="IPR036188">
    <property type="entry name" value="FAD/NAD-bd_sf"/>
</dbReference>
<dbReference type="InterPro" id="IPR037099">
    <property type="entry name" value="Fum_R/Succ_DH_flav-like_C_sf"/>
</dbReference>
<dbReference type="InterPro" id="IPR015939">
    <property type="entry name" value="Fum_Rdtase/Succ_DH_flav-like_C"/>
</dbReference>
<dbReference type="InterPro" id="IPR005288">
    <property type="entry name" value="NadB"/>
</dbReference>
<dbReference type="InterPro" id="IPR027477">
    <property type="entry name" value="Succ_DH/fumarate_Rdtase_cat_sf"/>
</dbReference>
<dbReference type="NCBIfam" id="TIGR00551">
    <property type="entry name" value="nadB"/>
    <property type="match status" value="1"/>
</dbReference>
<dbReference type="NCBIfam" id="NF005867">
    <property type="entry name" value="PRK07804.1"/>
    <property type="match status" value="1"/>
</dbReference>
<dbReference type="PANTHER" id="PTHR42716">
    <property type="entry name" value="L-ASPARTATE OXIDASE"/>
    <property type="match status" value="1"/>
</dbReference>
<dbReference type="PANTHER" id="PTHR42716:SF2">
    <property type="entry name" value="L-ASPARTATE OXIDASE, CHLOROPLASTIC"/>
    <property type="match status" value="1"/>
</dbReference>
<dbReference type="Pfam" id="PF00890">
    <property type="entry name" value="FAD_binding_2"/>
    <property type="match status" value="1"/>
</dbReference>
<dbReference type="Pfam" id="PF02910">
    <property type="entry name" value="Succ_DH_flav_C"/>
    <property type="match status" value="1"/>
</dbReference>
<dbReference type="PRINTS" id="PR00368">
    <property type="entry name" value="FADPNR"/>
</dbReference>
<dbReference type="PRINTS" id="PR00411">
    <property type="entry name" value="PNDRDTASEI"/>
</dbReference>
<dbReference type="SUPFAM" id="SSF51905">
    <property type="entry name" value="FAD/NAD(P)-binding domain"/>
    <property type="match status" value="1"/>
</dbReference>
<dbReference type="SUPFAM" id="SSF46977">
    <property type="entry name" value="Succinate dehydrogenase/fumarate reductase flavoprotein C-terminal domain"/>
    <property type="match status" value="1"/>
</dbReference>
<dbReference type="SUPFAM" id="SSF56425">
    <property type="entry name" value="Succinate dehydrogenase/fumarate reductase flavoprotein, catalytic domain"/>
    <property type="match status" value="1"/>
</dbReference>
<evidence type="ECO:0000250" key="1">
    <source>
        <dbReference type="UniProtKB" id="P10902"/>
    </source>
</evidence>
<evidence type="ECO:0000305" key="2"/>
<comment type="function">
    <text evidence="1">Catalyzes the oxidation of L-aspartate to iminoaspartate, the first step in the de novo biosynthesis of NAD(+).</text>
</comment>
<comment type="catalytic activity">
    <reaction evidence="1">
        <text>L-aspartate + O2 = iminosuccinate + H2O2</text>
        <dbReference type="Rhea" id="RHEA:25876"/>
        <dbReference type="ChEBI" id="CHEBI:15379"/>
        <dbReference type="ChEBI" id="CHEBI:16240"/>
        <dbReference type="ChEBI" id="CHEBI:29991"/>
        <dbReference type="ChEBI" id="CHEBI:77875"/>
        <dbReference type="EC" id="1.4.3.16"/>
    </reaction>
    <physiologicalReaction direction="left-to-right" evidence="1">
        <dbReference type="Rhea" id="RHEA:25877"/>
    </physiologicalReaction>
</comment>
<comment type="cofactor">
    <cofactor evidence="1">
        <name>FAD</name>
        <dbReference type="ChEBI" id="CHEBI:57692"/>
    </cofactor>
    <text evidence="1">Binds 1 FAD per subunit.</text>
</comment>
<comment type="pathway">
    <text evidence="1">Cofactor biosynthesis; NAD(+) biosynthesis; iminoaspartate from L-aspartate (oxidase route): step 1/1.</text>
</comment>
<comment type="subcellular location">
    <subcellularLocation>
        <location evidence="1">Cytoplasm</location>
    </subcellularLocation>
</comment>
<comment type="similarity">
    <text evidence="2">Belongs to the FAD-dependent oxidoreductase 2 family. NadB subfamily.</text>
</comment>
<protein>
    <recommendedName>
        <fullName evidence="1">L-aspartate oxidase</fullName>
        <shortName evidence="1">LASPO</shortName>
        <ecNumber evidence="1">1.4.3.16</ecNumber>
    </recommendedName>
    <alternativeName>
        <fullName>Quinolinate synthase B</fullName>
    </alternativeName>
</protein>
<gene>
    <name type="primary">nadB</name>
    <name type="ordered locus">Rv1595</name>
    <name type="ORF">MTCY336.09c</name>
</gene>
<sequence length="527" mass="53785">MAGPAWRDAADVVVIGTGVAGLAAALAADRAGRSVVVLSKAAQTHVTATHYAQGGIAVVLPDNDDSVDAHVADTLAAGAGLCDPDAVYSIVADGYRAVTDLVGAGARLDESVPGRWALTREGGHSRRRIVHAGGDATGAEVQRALQDAAGMLDIRTGHVALRVLHDGTAVTGLLVVRPDGCGIISAPSVILATGGLGHLYSATTNPAGSTGDGIALGLWAGVAVSDLEFIQFHPTMLFAGRAGGRRPLITEAIRGEGAILVDRQGNSITAGVHPMGDLAPRDVVAAAIDARLKATGDPCVYLDARGIEGFASRFPTVTASCRAAGIDPVRQPIPVVPGAHYSCGGIVTDVYGQTELLGLYAAGEVARTGLHGANRLASNSLLEGLVVGGRAGKAAAAHAAAAGRSRATSSATWPEPISYTALDRGDLQRAMSRDASMYRAAAGLHRLCDSLSGAQVRDVACRRDFEDVALTLVAQSVTAAALARTESRGCHHRAEYPCTVPEQARSIVVRGADDANAVCVQALVAVC</sequence>
<organism>
    <name type="scientific">Mycobacterium tuberculosis (strain ATCC 25618 / H37Rv)</name>
    <dbReference type="NCBI Taxonomy" id="83332"/>
    <lineage>
        <taxon>Bacteria</taxon>
        <taxon>Bacillati</taxon>
        <taxon>Actinomycetota</taxon>
        <taxon>Actinomycetes</taxon>
        <taxon>Mycobacteriales</taxon>
        <taxon>Mycobacteriaceae</taxon>
        <taxon>Mycobacterium</taxon>
        <taxon>Mycobacterium tuberculosis complex</taxon>
    </lineage>
</organism>
<keyword id="KW-0963">Cytoplasm</keyword>
<keyword id="KW-0274">FAD</keyword>
<keyword id="KW-0285">Flavoprotein</keyword>
<keyword id="KW-0547">Nucleotide-binding</keyword>
<keyword id="KW-0560">Oxidoreductase</keyword>
<keyword id="KW-0662">Pyridine nucleotide biosynthesis</keyword>
<keyword id="KW-1185">Reference proteome</keyword>
<accession>P9WJJ9</accession>
<accession>L0T9X5</accession>
<accession>O06595</accession>
<accession>P65499</accession>
<name>NADB_MYCTU</name>